<evidence type="ECO:0000255" key="1">
    <source>
        <dbReference type="HAMAP-Rule" id="MF_00091"/>
    </source>
</evidence>
<organism>
    <name type="scientific">Neisseria meningitidis serogroup C (strain 053442)</name>
    <dbReference type="NCBI Taxonomy" id="374833"/>
    <lineage>
        <taxon>Bacteria</taxon>
        <taxon>Pseudomonadati</taxon>
        <taxon>Pseudomonadota</taxon>
        <taxon>Betaproteobacteria</taxon>
        <taxon>Neisseriales</taxon>
        <taxon>Neisseriaceae</taxon>
        <taxon>Neisseria</taxon>
    </lineage>
</organism>
<dbReference type="EC" id="4.4.1.21" evidence="1"/>
<dbReference type="EMBL" id="CP000381">
    <property type="protein sequence ID" value="ABX72441.1"/>
    <property type="molecule type" value="Genomic_DNA"/>
</dbReference>
<dbReference type="RefSeq" id="WP_012221204.1">
    <property type="nucleotide sequence ID" value="NC_010120.1"/>
</dbReference>
<dbReference type="SMR" id="A9M0P7"/>
<dbReference type="KEGG" id="nmn:NMCC_0232"/>
<dbReference type="HOGENOM" id="CLU_107531_2_0_4"/>
<dbReference type="Proteomes" id="UP000001177">
    <property type="component" value="Chromosome"/>
</dbReference>
<dbReference type="GO" id="GO:0005506">
    <property type="term" value="F:iron ion binding"/>
    <property type="evidence" value="ECO:0007669"/>
    <property type="project" value="InterPro"/>
</dbReference>
<dbReference type="GO" id="GO:0043768">
    <property type="term" value="F:S-ribosylhomocysteine lyase activity"/>
    <property type="evidence" value="ECO:0007669"/>
    <property type="project" value="UniProtKB-UniRule"/>
</dbReference>
<dbReference type="GO" id="GO:0009372">
    <property type="term" value="P:quorum sensing"/>
    <property type="evidence" value="ECO:0007669"/>
    <property type="project" value="UniProtKB-UniRule"/>
</dbReference>
<dbReference type="FunFam" id="3.30.1360.80:FF:000001">
    <property type="entry name" value="S-ribosylhomocysteine lyase"/>
    <property type="match status" value="1"/>
</dbReference>
<dbReference type="Gene3D" id="3.30.1360.80">
    <property type="entry name" value="S-ribosylhomocysteinase (LuxS)"/>
    <property type="match status" value="1"/>
</dbReference>
<dbReference type="HAMAP" id="MF_00091">
    <property type="entry name" value="LuxS"/>
    <property type="match status" value="1"/>
</dbReference>
<dbReference type="InterPro" id="IPR037005">
    <property type="entry name" value="LuxS_sf"/>
</dbReference>
<dbReference type="InterPro" id="IPR011249">
    <property type="entry name" value="Metalloenz_LuxS/M16"/>
</dbReference>
<dbReference type="InterPro" id="IPR003815">
    <property type="entry name" value="S-ribosylhomocysteinase"/>
</dbReference>
<dbReference type="NCBIfam" id="NF002602">
    <property type="entry name" value="PRK02260.1-2"/>
    <property type="match status" value="1"/>
</dbReference>
<dbReference type="PANTHER" id="PTHR35799">
    <property type="entry name" value="S-RIBOSYLHOMOCYSTEINE LYASE"/>
    <property type="match status" value="1"/>
</dbReference>
<dbReference type="PANTHER" id="PTHR35799:SF1">
    <property type="entry name" value="S-RIBOSYLHOMOCYSTEINE LYASE"/>
    <property type="match status" value="1"/>
</dbReference>
<dbReference type="Pfam" id="PF02664">
    <property type="entry name" value="LuxS"/>
    <property type="match status" value="1"/>
</dbReference>
<dbReference type="PIRSF" id="PIRSF006160">
    <property type="entry name" value="AI2"/>
    <property type="match status" value="1"/>
</dbReference>
<dbReference type="PRINTS" id="PR01487">
    <property type="entry name" value="LUXSPROTEIN"/>
</dbReference>
<dbReference type="SUPFAM" id="SSF63411">
    <property type="entry name" value="LuxS/MPP-like metallohydrolase"/>
    <property type="match status" value="1"/>
</dbReference>
<protein>
    <recommendedName>
        <fullName evidence="1">S-ribosylhomocysteine lyase</fullName>
        <ecNumber evidence="1">4.4.1.21</ecNumber>
    </recommendedName>
    <alternativeName>
        <fullName evidence="1">AI-2 synthesis protein</fullName>
    </alternativeName>
    <alternativeName>
        <fullName evidence="1">Autoinducer-2 production protein LuxS</fullName>
    </alternativeName>
</protein>
<name>LUXS_NEIM0</name>
<reference key="1">
    <citation type="journal article" date="2008" name="Genomics">
        <title>Characterization of ST-4821 complex, a unique Neisseria meningitidis clone.</title>
        <authorList>
            <person name="Peng J."/>
            <person name="Yang L."/>
            <person name="Yang F."/>
            <person name="Yang J."/>
            <person name="Yan Y."/>
            <person name="Nie H."/>
            <person name="Zhang X."/>
            <person name="Xiong Z."/>
            <person name="Jiang Y."/>
            <person name="Cheng F."/>
            <person name="Xu X."/>
            <person name="Chen S."/>
            <person name="Sun L."/>
            <person name="Li W."/>
            <person name="Shen Y."/>
            <person name="Shao Z."/>
            <person name="Liang X."/>
            <person name="Xu J."/>
            <person name="Jin Q."/>
        </authorList>
    </citation>
    <scope>NUCLEOTIDE SEQUENCE [LARGE SCALE GENOMIC DNA]</scope>
    <source>
        <strain>053442</strain>
    </source>
</reference>
<feature type="chain" id="PRO_1000075456" description="S-ribosylhomocysteine lyase">
    <location>
        <begin position="1"/>
        <end position="168"/>
    </location>
</feature>
<feature type="binding site" evidence="1">
    <location>
        <position position="54"/>
    </location>
    <ligand>
        <name>Fe cation</name>
        <dbReference type="ChEBI" id="CHEBI:24875"/>
    </ligand>
</feature>
<feature type="binding site" evidence="1">
    <location>
        <position position="58"/>
    </location>
    <ligand>
        <name>Fe cation</name>
        <dbReference type="ChEBI" id="CHEBI:24875"/>
    </ligand>
</feature>
<feature type="binding site" evidence="1">
    <location>
        <position position="128"/>
    </location>
    <ligand>
        <name>Fe cation</name>
        <dbReference type="ChEBI" id="CHEBI:24875"/>
    </ligand>
</feature>
<sequence length="168" mass="18754">MPLLDSFKVDHTRMYAPAVRVAKTMTTPKGDTITVFDLRFCVPNKEILPEKGIHTLEHLFAGFMRDHLNGNGVEIIDISPMGCRTGFYMSLIGTPSEQQVADTWLASMQDVLTVQDQSKIPELNEYQCGTYLMHSLAEAQQIAQNVLARKVAVNKNEELTLDEGLLNA</sequence>
<comment type="function">
    <text evidence="1">Involved in the synthesis of autoinducer 2 (AI-2) which is secreted by bacteria and is used to communicate both the cell density and the metabolic potential of the environment. The regulation of gene expression in response to changes in cell density is called quorum sensing. Catalyzes the transformation of S-ribosylhomocysteine (RHC) to homocysteine (HC) and 4,5-dihydroxy-2,3-pentadione (DPD).</text>
</comment>
<comment type="catalytic activity">
    <reaction evidence="1">
        <text>S-(5-deoxy-D-ribos-5-yl)-L-homocysteine = (S)-4,5-dihydroxypentane-2,3-dione + L-homocysteine</text>
        <dbReference type="Rhea" id="RHEA:17753"/>
        <dbReference type="ChEBI" id="CHEBI:29484"/>
        <dbReference type="ChEBI" id="CHEBI:58195"/>
        <dbReference type="ChEBI" id="CHEBI:58199"/>
        <dbReference type="EC" id="4.4.1.21"/>
    </reaction>
</comment>
<comment type="cofactor">
    <cofactor evidence="1">
        <name>Fe cation</name>
        <dbReference type="ChEBI" id="CHEBI:24875"/>
    </cofactor>
    <text evidence="1">Binds 1 Fe cation per subunit.</text>
</comment>
<comment type="subunit">
    <text evidence="1">Homodimer.</text>
</comment>
<comment type="similarity">
    <text evidence="1">Belongs to the LuxS family.</text>
</comment>
<keyword id="KW-0071">Autoinducer synthesis</keyword>
<keyword id="KW-0408">Iron</keyword>
<keyword id="KW-0456">Lyase</keyword>
<keyword id="KW-0479">Metal-binding</keyword>
<keyword id="KW-0673">Quorum sensing</keyword>
<gene>
    <name evidence="1" type="primary">luxS</name>
    <name type="ordered locus">NMCC_0232</name>
</gene>
<accession>A9M0P7</accession>
<proteinExistence type="inferred from homology"/>